<accession>A2AE42</accession>
<accession>B2RPT5</accession>
<dbReference type="EC" id="7.2.1.3" evidence="4"/>
<dbReference type="EMBL" id="AL671854">
    <property type="status" value="NOT_ANNOTATED_CDS"/>
    <property type="molecule type" value="Genomic_DNA"/>
</dbReference>
<dbReference type="EMBL" id="BC137590">
    <property type="protein sequence ID" value="AAI37591.1"/>
    <property type="molecule type" value="mRNA"/>
</dbReference>
<dbReference type="CCDS" id="CCDS38598.1"/>
<dbReference type="RefSeq" id="NP_001074789.2">
    <property type="nucleotide sequence ID" value="NM_001081320.2"/>
</dbReference>
<dbReference type="SMR" id="A2AE42"/>
<dbReference type="FunCoup" id="A2AE42">
    <property type="interactions" value="32"/>
</dbReference>
<dbReference type="STRING" id="10090.ENSMUSP00000102266"/>
<dbReference type="PhosphoSitePlus" id="A2AE42"/>
<dbReference type="PaxDb" id="10090-ENSMUSP00000102266"/>
<dbReference type="ProteomicsDB" id="273860"/>
<dbReference type="Antibodypedia" id="20066">
    <property type="antibodies" value="106 antibodies from 21 providers"/>
</dbReference>
<dbReference type="Ensembl" id="ENSMUST00000106655.2">
    <property type="protein sequence ID" value="ENSMUSP00000102266.2"/>
    <property type="gene ID" value="ENSMUSG00000048796.8"/>
</dbReference>
<dbReference type="GeneID" id="72023"/>
<dbReference type="KEGG" id="mmu:72023"/>
<dbReference type="UCSC" id="uc008qyi.1">
    <property type="organism name" value="mouse"/>
</dbReference>
<dbReference type="AGR" id="MGI:1919273"/>
<dbReference type="CTD" id="284613"/>
<dbReference type="MGI" id="MGI:1919273">
    <property type="gene designation" value="Cyb561d1"/>
</dbReference>
<dbReference type="VEuPathDB" id="HostDB:ENSMUSG00000048796"/>
<dbReference type="eggNOG" id="ENOG502RYMK">
    <property type="taxonomic scope" value="Eukaryota"/>
</dbReference>
<dbReference type="GeneTree" id="ENSGT00440000038072"/>
<dbReference type="HOGENOM" id="CLU_072399_3_0_1"/>
<dbReference type="InParanoid" id="A2AE42"/>
<dbReference type="OMA" id="SDWFQAT"/>
<dbReference type="OrthoDB" id="432881at2759"/>
<dbReference type="PhylomeDB" id="A2AE42"/>
<dbReference type="TreeFam" id="TF323584"/>
<dbReference type="BioGRID-ORCS" id="72023">
    <property type="hits" value="1 hit in 76 CRISPR screens"/>
</dbReference>
<dbReference type="ChiTaRS" id="Cyb561d1">
    <property type="organism name" value="mouse"/>
</dbReference>
<dbReference type="PRO" id="PR:A2AE42"/>
<dbReference type="Proteomes" id="UP000000589">
    <property type="component" value="Chromosome 3"/>
</dbReference>
<dbReference type="RNAct" id="A2AE42">
    <property type="molecule type" value="protein"/>
</dbReference>
<dbReference type="Bgee" id="ENSMUSG00000048796">
    <property type="expression patterns" value="Expressed in granulocyte and 92 other cell types or tissues"/>
</dbReference>
<dbReference type="ExpressionAtlas" id="A2AE42">
    <property type="expression patterns" value="baseline and differential"/>
</dbReference>
<dbReference type="GO" id="GO:0016020">
    <property type="term" value="C:membrane"/>
    <property type="evidence" value="ECO:0007669"/>
    <property type="project" value="UniProtKB-SubCell"/>
</dbReference>
<dbReference type="GO" id="GO:0046872">
    <property type="term" value="F:metal ion binding"/>
    <property type="evidence" value="ECO:0007669"/>
    <property type="project" value="UniProtKB-KW"/>
</dbReference>
<dbReference type="GO" id="GO:0140571">
    <property type="term" value="F:transmembrane ascorbate ferrireductase activity"/>
    <property type="evidence" value="ECO:0007669"/>
    <property type="project" value="UniProtKB-EC"/>
</dbReference>
<dbReference type="GO" id="GO:0140575">
    <property type="term" value="F:transmembrane monodehydroascorbate reductase activity"/>
    <property type="evidence" value="ECO:0007669"/>
    <property type="project" value="InterPro"/>
</dbReference>
<dbReference type="CDD" id="cd08761">
    <property type="entry name" value="Cyt_b561_CYB561D2_like"/>
    <property type="match status" value="1"/>
</dbReference>
<dbReference type="Gene3D" id="1.20.120.1770">
    <property type="match status" value="1"/>
</dbReference>
<dbReference type="InterPro" id="IPR045150">
    <property type="entry name" value="CYB561D1/2"/>
</dbReference>
<dbReference type="InterPro" id="IPR006593">
    <property type="entry name" value="Cyt_b561/ferric_Rdtase_TM"/>
</dbReference>
<dbReference type="PANTHER" id="PTHR15422">
    <property type="entry name" value="OS05G0565100 PROTEIN"/>
    <property type="match status" value="1"/>
</dbReference>
<dbReference type="PANTHER" id="PTHR15422:SF9">
    <property type="entry name" value="TRANSMEMBRANE REDUCTASE CYB561D1-RELATED"/>
    <property type="match status" value="1"/>
</dbReference>
<dbReference type="Pfam" id="PF03188">
    <property type="entry name" value="Cytochrom_B561"/>
    <property type="match status" value="1"/>
</dbReference>
<dbReference type="SMART" id="SM00665">
    <property type="entry name" value="B561"/>
    <property type="match status" value="1"/>
</dbReference>
<dbReference type="PROSITE" id="PS50939">
    <property type="entry name" value="CYTOCHROME_B561"/>
    <property type="match status" value="1"/>
</dbReference>
<feature type="chain" id="PRO_0000320295" description="Probable transmembrane reductase CYB561D1">
    <location>
        <begin position="1"/>
        <end position="229"/>
    </location>
</feature>
<feature type="topological domain" description="Cytoplasmic" evidence="4">
    <location>
        <begin position="1"/>
        <end position="24"/>
    </location>
</feature>
<feature type="transmembrane region" description="Helical" evidence="2">
    <location>
        <begin position="25"/>
        <end position="45"/>
    </location>
</feature>
<feature type="topological domain" description="Lumenal" evidence="4">
    <location>
        <begin position="46"/>
        <end position="53"/>
    </location>
</feature>
<feature type="transmembrane region" description="Helical" evidence="2">
    <location>
        <begin position="54"/>
        <end position="74"/>
    </location>
</feature>
<feature type="topological domain" description="Cytoplasmic" evidence="4">
    <location>
        <begin position="75"/>
        <end position="91"/>
    </location>
</feature>
<feature type="transmembrane region" description="Helical" evidence="2">
    <location>
        <begin position="92"/>
        <end position="112"/>
    </location>
</feature>
<feature type="topological domain" description="Lumenal" evidence="4">
    <location>
        <begin position="113"/>
        <end position="128"/>
    </location>
</feature>
<feature type="transmembrane region" description="Helical" evidence="2">
    <location>
        <begin position="129"/>
        <end position="149"/>
    </location>
</feature>
<feature type="topological domain" description="Cytoplasmic" evidence="4">
    <location>
        <begin position="150"/>
        <end position="169"/>
    </location>
</feature>
<feature type="transmembrane region" description="Helical" evidence="2">
    <location>
        <begin position="170"/>
        <end position="190"/>
    </location>
</feature>
<feature type="topological domain" description="Lumenal" evidence="4">
    <location>
        <begin position="191"/>
        <end position="193"/>
    </location>
</feature>
<feature type="transmembrane region" description="Helical" evidence="2">
    <location>
        <begin position="194"/>
        <end position="214"/>
    </location>
</feature>
<feature type="topological domain" description="Cytoplasmic" evidence="4">
    <location>
        <begin position="215"/>
        <end position="229"/>
    </location>
</feature>
<feature type="domain" description="Cytochrome b561" evidence="3">
    <location>
        <begin position="22"/>
        <end position="224"/>
    </location>
</feature>
<feature type="binding site" description="axial binding residue" evidence="1">
    <location>
        <position position="55"/>
    </location>
    <ligand>
        <name>heme b</name>
        <dbReference type="ChEBI" id="CHEBI:60344"/>
        <label>1</label>
    </ligand>
    <ligandPart>
        <name>Fe</name>
        <dbReference type="ChEBI" id="CHEBI:18248"/>
    </ligandPart>
</feature>
<feature type="binding site" description="axial binding residue" evidence="1">
    <location>
        <position position="93"/>
    </location>
    <ligand>
        <name>heme b</name>
        <dbReference type="ChEBI" id="CHEBI:60344"/>
        <label>2</label>
    </ligand>
    <ligandPart>
        <name>Fe</name>
        <dbReference type="ChEBI" id="CHEBI:18248"/>
    </ligandPart>
</feature>
<feature type="binding site" description="axial binding residue" evidence="1">
    <location>
        <position position="127"/>
    </location>
    <ligand>
        <name>heme b</name>
        <dbReference type="ChEBI" id="CHEBI:60344"/>
        <label>1</label>
    </ligand>
    <ligandPart>
        <name>Fe</name>
        <dbReference type="ChEBI" id="CHEBI:18248"/>
    </ligandPart>
</feature>
<feature type="binding site" description="axial binding residue" evidence="1">
    <location>
        <position position="166"/>
    </location>
    <ligand>
        <name>heme b</name>
        <dbReference type="ChEBI" id="CHEBI:60344"/>
        <label>2</label>
    </ligand>
    <ligandPart>
        <name>Fe</name>
        <dbReference type="ChEBI" id="CHEBI:18248"/>
    </ligandPart>
</feature>
<name>C56D1_MOUSE</name>
<comment type="function">
    <text evidence="4">Probable transmembrane reductase that may use ascorbate as an electron donor and transfer electrons across membranes to reduce monodehydro-L-ascorbate radical and iron cations Fe(3+) in another cellular compartment.</text>
</comment>
<comment type="catalytic activity">
    <reaction evidence="4">
        <text>monodehydro-L-ascorbate radical(out) + L-ascorbate(in) = monodehydro-L-ascorbate radical(in) + L-ascorbate(out)</text>
        <dbReference type="Rhea" id="RHEA:66524"/>
        <dbReference type="ChEBI" id="CHEBI:38290"/>
        <dbReference type="ChEBI" id="CHEBI:59513"/>
    </reaction>
</comment>
<comment type="catalytic activity">
    <reaction evidence="4">
        <text>Fe(3+)(out) + L-ascorbate(in) = monodehydro-L-ascorbate radical(in) + Fe(2+)(out) + H(+)</text>
        <dbReference type="Rhea" id="RHEA:30403"/>
        <dbReference type="ChEBI" id="CHEBI:15378"/>
        <dbReference type="ChEBI" id="CHEBI:29033"/>
        <dbReference type="ChEBI" id="CHEBI:29034"/>
        <dbReference type="ChEBI" id="CHEBI:38290"/>
        <dbReference type="ChEBI" id="CHEBI:59513"/>
        <dbReference type="EC" id="7.2.1.3"/>
    </reaction>
</comment>
<comment type="cofactor">
    <cofactor evidence="1">
        <name>heme b</name>
        <dbReference type="ChEBI" id="CHEBI:60344"/>
    </cofactor>
    <text evidence="1">Binds 2 heme b groups non-covalently.</text>
</comment>
<comment type="subcellular location">
    <subcellularLocation>
        <location evidence="4">Membrane</location>
        <topology evidence="4">Multi-pass membrane protein</topology>
    </subcellularLocation>
</comment>
<protein>
    <recommendedName>
        <fullName evidence="4">Probable transmembrane reductase CYB561D1</fullName>
        <ecNumber evidence="4">7.2.1.3</ecNumber>
    </recommendedName>
    <alternativeName>
        <fullName evidence="5">Cytochrome b561 domain-containing protein 1</fullName>
    </alternativeName>
</protein>
<sequence>MHSMEVGLVPAPAREPRLTRWLRRGSGILAHLIALGFTIFLTVLSRPGTSLFSWHPVFMALAFCLCMAEAILLFSPEHSLFFFCSRKTRIRLHWAGQTMAILCAVLGLGFIISSKIRSEMSHLVSWHSWIGALTLLATGGQALCGLCLLCPRAARVSRVARLKLYHLTCGLVVYLMATVTVLLGMYSVWFQAQIKGTAWYLCLGLPLYPALVIMHQISSSYLPRKKVEI</sequence>
<gene>
    <name evidence="5" type="primary">Cyb561d1</name>
</gene>
<reference key="1">
    <citation type="journal article" date="2009" name="PLoS Biol.">
        <title>Lineage-specific biology revealed by a finished genome assembly of the mouse.</title>
        <authorList>
            <person name="Church D.M."/>
            <person name="Goodstadt L."/>
            <person name="Hillier L.W."/>
            <person name="Zody M.C."/>
            <person name="Goldstein S."/>
            <person name="She X."/>
            <person name="Bult C.J."/>
            <person name="Agarwala R."/>
            <person name="Cherry J.L."/>
            <person name="DiCuccio M."/>
            <person name="Hlavina W."/>
            <person name="Kapustin Y."/>
            <person name="Meric P."/>
            <person name="Maglott D."/>
            <person name="Birtle Z."/>
            <person name="Marques A.C."/>
            <person name="Graves T."/>
            <person name="Zhou S."/>
            <person name="Teague B."/>
            <person name="Potamousis K."/>
            <person name="Churas C."/>
            <person name="Place M."/>
            <person name="Herschleb J."/>
            <person name="Runnheim R."/>
            <person name="Forrest D."/>
            <person name="Amos-Landgraf J."/>
            <person name="Schwartz D.C."/>
            <person name="Cheng Z."/>
            <person name="Lindblad-Toh K."/>
            <person name="Eichler E.E."/>
            <person name="Ponting C.P."/>
        </authorList>
    </citation>
    <scope>NUCLEOTIDE SEQUENCE [LARGE SCALE GENOMIC DNA]</scope>
    <source>
        <strain>C57BL/6J</strain>
    </source>
</reference>
<reference key="2">
    <citation type="journal article" date="2004" name="Genome Res.">
        <title>The status, quality, and expansion of the NIH full-length cDNA project: the Mammalian Gene Collection (MGC).</title>
        <authorList>
            <consortium name="The MGC Project Team"/>
        </authorList>
    </citation>
    <scope>NUCLEOTIDE SEQUENCE [LARGE SCALE MRNA]</scope>
    <source>
        <tissue>Brain</tissue>
    </source>
</reference>
<organism>
    <name type="scientific">Mus musculus</name>
    <name type="common">Mouse</name>
    <dbReference type="NCBI Taxonomy" id="10090"/>
    <lineage>
        <taxon>Eukaryota</taxon>
        <taxon>Metazoa</taxon>
        <taxon>Chordata</taxon>
        <taxon>Craniata</taxon>
        <taxon>Vertebrata</taxon>
        <taxon>Euteleostomi</taxon>
        <taxon>Mammalia</taxon>
        <taxon>Eutheria</taxon>
        <taxon>Euarchontoglires</taxon>
        <taxon>Glires</taxon>
        <taxon>Rodentia</taxon>
        <taxon>Myomorpha</taxon>
        <taxon>Muroidea</taxon>
        <taxon>Muridae</taxon>
        <taxon>Murinae</taxon>
        <taxon>Mus</taxon>
        <taxon>Mus</taxon>
    </lineage>
</organism>
<proteinExistence type="evidence at transcript level"/>
<evidence type="ECO:0000250" key="1">
    <source>
        <dbReference type="UniProtKB" id="Q53TN4"/>
    </source>
</evidence>
<evidence type="ECO:0000255" key="2"/>
<evidence type="ECO:0000255" key="3">
    <source>
        <dbReference type="PROSITE-ProRule" id="PRU00242"/>
    </source>
</evidence>
<evidence type="ECO:0000305" key="4"/>
<evidence type="ECO:0000312" key="5">
    <source>
        <dbReference type="MGI" id="MGI:1919273"/>
    </source>
</evidence>
<keyword id="KW-0249">Electron transport</keyword>
<keyword id="KW-0349">Heme</keyword>
<keyword id="KW-0408">Iron</keyword>
<keyword id="KW-0472">Membrane</keyword>
<keyword id="KW-0479">Metal-binding</keyword>
<keyword id="KW-1185">Reference proteome</keyword>
<keyword id="KW-1278">Translocase</keyword>
<keyword id="KW-0812">Transmembrane</keyword>
<keyword id="KW-1133">Transmembrane helix</keyword>
<keyword id="KW-0813">Transport</keyword>